<comment type="function">
    <text evidence="1">Acts with RNA polymerase to initiate transcription from intermediate gene promoters.</text>
</comment>
<comment type="subunit">
    <text evidence="1">Heterodimer of a 45 kDa and a 32 kDa subunit.</text>
</comment>
<comment type="similarity">
    <text evidence="2">Belongs to the poxviruses A23 family.</text>
</comment>
<name>VTF3L_ECTVM</name>
<evidence type="ECO:0000250" key="1"/>
<evidence type="ECO:0000305" key="2"/>
<organism>
    <name type="scientific">Ectromelia virus (strain Moscow)</name>
    <name type="common">ECTV</name>
    <name type="synonym">Mousepox virus</name>
    <dbReference type="NCBI Taxonomy" id="265874"/>
    <lineage>
        <taxon>Viruses</taxon>
        <taxon>Varidnaviria</taxon>
        <taxon>Bamfordvirae</taxon>
        <taxon>Nucleocytoviricota</taxon>
        <taxon>Pokkesviricetes</taxon>
        <taxon>Chitovirales</taxon>
        <taxon>Poxviridae</taxon>
        <taxon>Chordopoxvirinae</taxon>
        <taxon>Orthopoxvirus</taxon>
        <taxon>Ectromelia virus</taxon>
    </lineage>
</organism>
<reference key="1">
    <citation type="journal article" date="2003" name="Virology">
        <title>The genomic sequence of Ectromelia virus, the causative agent of mousepox.</title>
        <authorList>
            <person name="Chen N."/>
            <person name="Danila M.I."/>
            <person name="Feng Z."/>
            <person name="Buller R.M."/>
            <person name="Wang C."/>
            <person name="Han X."/>
            <person name="Lefkowitz E.J."/>
            <person name="Upton C."/>
        </authorList>
    </citation>
    <scope>NUCLEOTIDE SEQUENCE [LARGE SCALE GENOMIC DNA]</scope>
</reference>
<proteinExistence type="inferred from homology"/>
<feature type="chain" id="PRO_0000099187" description="Intermediate transcription factor 3 large subunit">
    <location>
        <begin position="1"/>
        <end position="382"/>
    </location>
</feature>
<keyword id="KW-0010">Activator</keyword>
<keyword id="KW-0804">Transcription</keyword>
<keyword id="KW-0805">Transcription regulation</keyword>
<accession>Q8JL91</accession>
<dbReference type="EMBL" id="AF012825">
    <property type="protein sequence ID" value="AAM92431.1"/>
    <property type="molecule type" value="Genomic_DNA"/>
</dbReference>
<dbReference type="RefSeq" id="NP_671645.1">
    <property type="nucleotide sequence ID" value="NC_004105.1"/>
</dbReference>
<dbReference type="SMR" id="Q8JL91"/>
<dbReference type="GeneID" id="951542"/>
<dbReference type="KEGG" id="vg:951542"/>
<dbReference type="Proteomes" id="UP000172110">
    <property type="component" value="Segment"/>
</dbReference>
<dbReference type="InterPro" id="IPR008789">
    <property type="entry name" value="Poxvirus_intermed-TF"/>
</dbReference>
<dbReference type="Pfam" id="PF05718">
    <property type="entry name" value="Pox_int_trans"/>
    <property type="match status" value="1"/>
</dbReference>
<protein>
    <recommendedName>
        <fullName>Intermediate transcription factor 3 large subunit</fullName>
    </recommendedName>
    <alternativeName>
        <fullName>VITF-3 45 kDa subunit</fullName>
    </alternativeName>
</protein>
<sequence>MDNLFTFLHEIEDRYARTIFNFHLISCDEIGDIYGLMKERISSEDMFDNIVYNKDIHPAIKKLVYCDIQLTKHIINQNTYPVFNDSSQVKCCHYFDINSDNSNISSRTVEIFEREKSSLVSYIKTTNKKRKVNYGEIKKTVHGGTNANYFSGKKSDEYLSTTVRSNINQPWIKTISKRMRVDIINHSIVTRGKSSILQTIEIIFTNRTCVKIFKDSTMHIILSKDKDEKGCIHMIDKLFYVYYNLFLLFEDIIQNKYFNEVANIVNHVLTVTALDEKLFLIKKMAEHDVYGVSNFKIGMFNLTFIKSLDHTVFPSLLDEDSKIKFFKGKKLNIVALRSLDDCINYVTKSENMIEMMKERSTILNSIDIETESVDRLKELLLK</sequence>
<organismHost>
    <name type="scientific">Mus musculus</name>
    <name type="common">Mouse</name>
    <dbReference type="NCBI Taxonomy" id="10090"/>
</organismHost>
<gene>
    <name type="primary">VITF3L</name>
    <name type="ordered locus">EVM126</name>
</gene>